<sequence length="271" mass="27905">MYYAVSQARVNAVPGTMLRPQRPGDLQLGASLYELVGYRQPPSSSSSSTSSTSSTSSSSTTAPLLPKAAREKPEAPAEPPGPGPGSGAHPGGSARPDAKEEQQQQLRRKINSRERKRMQDLNLAMDALREVILPYSAAHCQGAPGRKLSKIATLLLARNYILLLGSSLQELRRALGEGAGPAAPRLLLAGLPLLAAAPGSVLLAPGAVGPPDALRPAKYLSLALDEPPCGQFALPGGGAGGPGLCTCAVCKFPHLVPASLGLAAVQAQFSK</sequence>
<keyword id="KW-0217">Developmental protein</keyword>
<keyword id="KW-0238">DNA-binding</keyword>
<keyword id="KW-0539">Nucleus</keyword>
<keyword id="KW-1267">Proteomics identification</keyword>
<keyword id="KW-1185">Reference proteome</keyword>
<keyword id="KW-0804">Transcription</keyword>
<keyword id="KW-0805">Transcription regulation</keyword>
<organism>
    <name type="scientific">Homo sapiens</name>
    <name type="common">Human</name>
    <dbReference type="NCBI Taxonomy" id="9606"/>
    <lineage>
        <taxon>Eukaryota</taxon>
        <taxon>Metazoa</taxon>
        <taxon>Chordata</taxon>
        <taxon>Craniata</taxon>
        <taxon>Vertebrata</taxon>
        <taxon>Euteleostomi</taxon>
        <taxon>Mammalia</taxon>
        <taxon>Eutheria</taxon>
        <taxon>Euarchontoglires</taxon>
        <taxon>Primates</taxon>
        <taxon>Haplorrhini</taxon>
        <taxon>Catarrhini</taxon>
        <taxon>Hominidae</taxon>
        <taxon>Homo</taxon>
    </lineage>
</organism>
<comment type="function">
    <text evidence="1 4">Promotes formation and maturation of oligodendrocytes, especially within the brain. Cooperates with OLIG2 to establish the pMN domain of the embryonic neural tube (By similarity).</text>
</comment>
<comment type="interaction">
    <interactant intactId="EBI-3867416">
        <id>Q8TAK6</id>
    </interactant>
    <interactant intactId="EBI-970191">
        <id>Q14451</id>
        <label>GRB7</label>
    </interactant>
    <organismsDiffer>false</organismsDiffer>
    <experiments>3</experiments>
</comment>
<comment type="interaction">
    <interactant intactId="EBI-3867416">
        <id>Q8TAK6</id>
    </interactant>
    <interactant intactId="EBI-9834454">
        <id>P08631-2</id>
        <label>HCK</label>
    </interactant>
    <organismsDiffer>false</organismsDiffer>
    <experiments>2</experiments>
</comment>
<comment type="interaction">
    <interactant intactId="EBI-3867416">
        <id>Q8TAK6</id>
    </interactant>
    <interactant intactId="EBI-79893">
        <id>Q92569</id>
        <label>PIK3R3</label>
    </interactant>
    <organismsDiffer>false</organismsDiffer>
    <experiments>2</experiments>
</comment>
<comment type="interaction">
    <interactant intactId="EBI-3867416">
        <id>Q8TAK6</id>
    </interactant>
    <interactant intactId="EBI-3923013">
        <id>O14796</id>
        <label>SH2D1B</label>
    </interactant>
    <organismsDiffer>false</organismsDiffer>
    <experiments>2</experiments>
</comment>
<comment type="interaction">
    <interactant intactId="EBI-3867416">
        <id>Q8TAK6</id>
    </interactant>
    <interactant intactId="EBI-1040141">
        <id>Q15796</id>
        <label>SMAD2</label>
    </interactant>
    <organismsDiffer>false</organismsDiffer>
    <experiments>2</experiments>
</comment>
<comment type="interaction">
    <interactant intactId="EBI-3867416">
        <id>Q8TAK6</id>
    </interactant>
    <interactant intactId="EBI-515331">
        <id>P07947</id>
        <label>YES1</label>
    </interactant>
    <organismsDiffer>false</organismsDiffer>
    <experiments>3</experiments>
</comment>
<comment type="subcellular location">
    <subcellularLocation>
        <location evidence="2">Nucleus</location>
    </subcellularLocation>
</comment>
<comment type="tissue specificity">
    <text evidence="5">Expressed in the brain, in oligodendrocytes. Strongly expressed in oligodendrogliomas, while expression is weak to moderate in astrocytomas. Expression in glioblastomas is highly variable.</text>
</comment>
<comment type="sequence caution" evidence="6">
    <conflict type="erroneous initiation">
        <sequence resource="EMBL-CDS" id="AAH26989"/>
    </conflict>
    <text>Truncated N-terminus.</text>
</comment>
<comment type="sequence caution" evidence="6">
    <conflict type="erroneous initiation">
        <sequence resource="EMBL-CDS" id="DAA01058"/>
    </conflict>
    <text>Truncated N-terminus.</text>
</comment>
<gene>
    <name type="primary">OLIG1</name>
    <name type="synonym">BHLHB6</name>
    <name type="synonym">BHLHE21</name>
</gene>
<protein>
    <recommendedName>
        <fullName>Oligodendrocyte transcription factor 1</fullName>
        <shortName>Oligo1</shortName>
    </recommendedName>
    <alternativeName>
        <fullName>Class B basic helix-loop-helix protein 6</fullName>
        <shortName>bHLHb6</shortName>
    </alternativeName>
    <alternativeName>
        <fullName>Class E basic helix-loop-helix protein 21</fullName>
        <shortName>bHLHe21</shortName>
    </alternativeName>
</protein>
<feature type="chain" id="PRO_0000127411" description="Oligodendrocyte transcription factor 1">
    <location>
        <begin position="1"/>
        <end position="271"/>
    </location>
</feature>
<feature type="domain" description="bHLH" evidence="2">
    <location>
        <begin position="105"/>
        <end position="164"/>
    </location>
</feature>
<feature type="region of interest" description="Disordered" evidence="3">
    <location>
        <begin position="38"/>
        <end position="117"/>
    </location>
</feature>
<feature type="compositionally biased region" description="Low complexity" evidence="3">
    <location>
        <begin position="43"/>
        <end position="61"/>
    </location>
</feature>
<name>OLIG1_HUMAN</name>
<dbReference type="EMBL" id="AL834450">
    <property type="protein sequence ID" value="CAD39110.1"/>
    <property type="molecule type" value="mRNA"/>
</dbReference>
<dbReference type="EMBL" id="AP000289">
    <property type="status" value="NOT_ANNOTATED_CDS"/>
    <property type="molecule type" value="Genomic_DNA"/>
</dbReference>
<dbReference type="EMBL" id="BC026989">
    <property type="protein sequence ID" value="AAH26989.1"/>
    <property type="status" value="ALT_INIT"/>
    <property type="molecule type" value="mRNA"/>
</dbReference>
<dbReference type="EMBL" id="BC033290">
    <property type="protein sequence ID" value="AAH33290.1"/>
    <property type="molecule type" value="mRNA"/>
</dbReference>
<dbReference type="EMBL" id="BK000278">
    <property type="protein sequence ID" value="DAA01058.1"/>
    <property type="status" value="ALT_INIT"/>
    <property type="molecule type" value="mRNA"/>
</dbReference>
<dbReference type="CCDS" id="CCDS42920.2"/>
<dbReference type="RefSeq" id="NP_620450.2">
    <property type="nucleotide sequence ID" value="NM_138983.3"/>
</dbReference>
<dbReference type="SMR" id="Q8TAK6"/>
<dbReference type="BioGRID" id="125511">
    <property type="interactions" value="28"/>
</dbReference>
<dbReference type="FunCoup" id="Q8TAK6">
    <property type="interactions" value="816"/>
</dbReference>
<dbReference type="IntAct" id="Q8TAK6">
    <property type="interactions" value="23"/>
</dbReference>
<dbReference type="MINT" id="Q8TAK6"/>
<dbReference type="STRING" id="9606.ENSP00000371785"/>
<dbReference type="iPTMnet" id="Q8TAK6"/>
<dbReference type="PhosphoSitePlus" id="Q8TAK6"/>
<dbReference type="BioMuta" id="OLIG1"/>
<dbReference type="DMDM" id="22653884"/>
<dbReference type="MassIVE" id="Q8TAK6"/>
<dbReference type="PaxDb" id="9606-ENSP00000371785"/>
<dbReference type="PeptideAtlas" id="Q8TAK6"/>
<dbReference type="ProteomicsDB" id="73889"/>
<dbReference type="TopDownProteomics" id="Q8TAK6"/>
<dbReference type="Antibodypedia" id="22667">
    <property type="antibodies" value="354 antibodies from 40 providers"/>
</dbReference>
<dbReference type="DNASU" id="116448"/>
<dbReference type="Ensembl" id="ENST00000382348.2">
    <property type="protein sequence ID" value="ENSP00000371785.1"/>
    <property type="gene ID" value="ENSG00000184221.13"/>
</dbReference>
<dbReference type="GeneID" id="116448"/>
<dbReference type="KEGG" id="hsa:116448"/>
<dbReference type="MANE-Select" id="ENST00000382348.2">
    <property type="protein sequence ID" value="ENSP00000371785.1"/>
    <property type="RefSeq nucleotide sequence ID" value="NM_138983.3"/>
    <property type="RefSeq protein sequence ID" value="NP_620450.2"/>
</dbReference>
<dbReference type="UCSC" id="uc002yqz.4">
    <property type="organism name" value="human"/>
</dbReference>
<dbReference type="AGR" id="HGNC:16983"/>
<dbReference type="CTD" id="116448"/>
<dbReference type="DisGeNET" id="116448"/>
<dbReference type="GeneCards" id="OLIG1"/>
<dbReference type="HGNC" id="HGNC:16983">
    <property type="gene designation" value="OLIG1"/>
</dbReference>
<dbReference type="HPA" id="ENSG00000184221">
    <property type="expression patterns" value="Tissue enriched (brain)"/>
</dbReference>
<dbReference type="MIM" id="606385">
    <property type="type" value="gene"/>
</dbReference>
<dbReference type="neXtProt" id="NX_Q8TAK6"/>
<dbReference type="OpenTargets" id="ENSG00000184221"/>
<dbReference type="PharmGKB" id="PA31918"/>
<dbReference type="VEuPathDB" id="HostDB:ENSG00000184221"/>
<dbReference type="eggNOG" id="KOG3898">
    <property type="taxonomic scope" value="Eukaryota"/>
</dbReference>
<dbReference type="GeneTree" id="ENSGT00940000162722"/>
<dbReference type="HOGENOM" id="CLU_060337_0_0_1"/>
<dbReference type="InParanoid" id="Q8TAK6"/>
<dbReference type="OMA" id="CKFPHLF"/>
<dbReference type="OrthoDB" id="10011855at2759"/>
<dbReference type="PAN-GO" id="Q8TAK6">
    <property type="GO annotations" value="5 GO annotations based on evolutionary models"/>
</dbReference>
<dbReference type="PhylomeDB" id="Q8TAK6"/>
<dbReference type="TreeFam" id="TF322733"/>
<dbReference type="PathwayCommons" id="Q8TAK6"/>
<dbReference type="SignaLink" id="Q8TAK6"/>
<dbReference type="SIGNOR" id="Q8TAK6"/>
<dbReference type="BioGRID-ORCS" id="116448">
    <property type="hits" value="13 hits in 1169 CRISPR screens"/>
</dbReference>
<dbReference type="GeneWiki" id="OLIG1"/>
<dbReference type="GenomeRNAi" id="116448"/>
<dbReference type="Pharos" id="Q8TAK6">
    <property type="development level" value="Tbio"/>
</dbReference>
<dbReference type="PRO" id="PR:Q8TAK6"/>
<dbReference type="Proteomes" id="UP000005640">
    <property type="component" value="Chromosome 21"/>
</dbReference>
<dbReference type="RNAct" id="Q8TAK6">
    <property type="molecule type" value="protein"/>
</dbReference>
<dbReference type="Bgee" id="ENSG00000184221">
    <property type="expression patterns" value="Expressed in inferior vagus X ganglion and 122 other cell types or tissues"/>
</dbReference>
<dbReference type="ExpressionAtlas" id="Q8TAK6">
    <property type="expression patterns" value="baseline and differential"/>
</dbReference>
<dbReference type="GO" id="GO:0000785">
    <property type="term" value="C:chromatin"/>
    <property type="evidence" value="ECO:0000247"/>
    <property type="project" value="NTNU_SB"/>
</dbReference>
<dbReference type="GO" id="GO:0005634">
    <property type="term" value="C:nucleus"/>
    <property type="evidence" value="ECO:0000318"/>
    <property type="project" value="GO_Central"/>
</dbReference>
<dbReference type="GO" id="GO:0000981">
    <property type="term" value="F:DNA-binding transcription factor activity, RNA polymerase II-specific"/>
    <property type="evidence" value="ECO:0000247"/>
    <property type="project" value="NTNU_SB"/>
</dbReference>
<dbReference type="GO" id="GO:0070888">
    <property type="term" value="F:E-box binding"/>
    <property type="evidence" value="ECO:0000318"/>
    <property type="project" value="GO_Central"/>
</dbReference>
<dbReference type="GO" id="GO:0046983">
    <property type="term" value="F:protein dimerization activity"/>
    <property type="evidence" value="ECO:0007669"/>
    <property type="project" value="InterPro"/>
</dbReference>
<dbReference type="GO" id="GO:0061564">
    <property type="term" value="P:axon development"/>
    <property type="evidence" value="ECO:0000318"/>
    <property type="project" value="GO_Central"/>
</dbReference>
<dbReference type="GO" id="GO:0048663">
    <property type="term" value="P:neuron fate commitment"/>
    <property type="evidence" value="ECO:0007669"/>
    <property type="project" value="Ensembl"/>
</dbReference>
<dbReference type="GO" id="GO:0014003">
    <property type="term" value="P:oligodendrocyte development"/>
    <property type="evidence" value="ECO:0007669"/>
    <property type="project" value="Ensembl"/>
</dbReference>
<dbReference type="GO" id="GO:0045944">
    <property type="term" value="P:positive regulation of transcription by RNA polymerase II"/>
    <property type="evidence" value="ECO:0000318"/>
    <property type="project" value="GO_Central"/>
</dbReference>
<dbReference type="GO" id="GO:0007423">
    <property type="term" value="P:sensory organ development"/>
    <property type="evidence" value="ECO:0000318"/>
    <property type="project" value="GO_Central"/>
</dbReference>
<dbReference type="CDD" id="cd18942">
    <property type="entry name" value="bHLH_TS_OLIG1"/>
    <property type="match status" value="1"/>
</dbReference>
<dbReference type="FunFam" id="4.10.280.10:FF:000031">
    <property type="entry name" value="Oligodendrocyte transcription factor 3"/>
    <property type="match status" value="1"/>
</dbReference>
<dbReference type="Gene3D" id="4.10.280.10">
    <property type="entry name" value="Helix-loop-helix DNA-binding domain"/>
    <property type="match status" value="1"/>
</dbReference>
<dbReference type="InterPro" id="IPR011598">
    <property type="entry name" value="bHLH_dom"/>
</dbReference>
<dbReference type="InterPro" id="IPR050359">
    <property type="entry name" value="bHLH_transcription_factors"/>
</dbReference>
<dbReference type="InterPro" id="IPR036638">
    <property type="entry name" value="HLH_DNA-bd_sf"/>
</dbReference>
<dbReference type="InterPro" id="IPR032657">
    <property type="entry name" value="Olig1_bHLH"/>
</dbReference>
<dbReference type="PANTHER" id="PTHR19290">
    <property type="entry name" value="BASIC HELIX-LOOP-HELIX PROTEIN NEUROGENIN-RELATED"/>
    <property type="match status" value="1"/>
</dbReference>
<dbReference type="PANTHER" id="PTHR19290:SF7">
    <property type="entry name" value="OLIGODENDROCYTE TRANSCRIPTION FACTOR 1"/>
    <property type="match status" value="1"/>
</dbReference>
<dbReference type="Pfam" id="PF00010">
    <property type="entry name" value="HLH"/>
    <property type="match status" value="1"/>
</dbReference>
<dbReference type="SMART" id="SM00353">
    <property type="entry name" value="HLH"/>
    <property type="match status" value="1"/>
</dbReference>
<dbReference type="SUPFAM" id="SSF47459">
    <property type="entry name" value="HLH, helix-loop-helix DNA-binding domain"/>
    <property type="match status" value="1"/>
</dbReference>
<dbReference type="PROSITE" id="PS50888">
    <property type="entry name" value="BHLH"/>
    <property type="match status" value="1"/>
</dbReference>
<evidence type="ECO:0000250" key="1"/>
<evidence type="ECO:0000255" key="2">
    <source>
        <dbReference type="PROSITE-ProRule" id="PRU00981"/>
    </source>
</evidence>
<evidence type="ECO:0000256" key="3">
    <source>
        <dbReference type="SAM" id="MobiDB-lite"/>
    </source>
</evidence>
<evidence type="ECO:0000269" key="4">
    <source>
    </source>
</evidence>
<evidence type="ECO:0000269" key="5">
    <source>
    </source>
</evidence>
<evidence type="ECO:0000305" key="6"/>
<reference key="1">
    <citation type="journal article" date="2007" name="BMC Genomics">
        <title>The full-ORF clone resource of the German cDNA consortium.</title>
        <authorList>
            <person name="Bechtel S."/>
            <person name="Rosenfelder H."/>
            <person name="Duda A."/>
            <person name="Schmidt C.P."/>
            <person name="Ernst U."/>
            <person name="Wellenreuther R."/>
            <person name="Mehrle A."/>
            <person name="Schuster C."/>
            <person name="Bahr A."/>
            <person name="Bloecker H."/>
            <person name="Heubner D."/>
            <person name="Hoerlein A."/>
            <person name="Michel G."/>
            <person name="Wedler H."/>
            <person name="Koehrer K."/>
            <person name="Ottenwaelder B."/>
            <person name="Poustka A."/>
            <person name="Wiemann S."/>
            <person name="Schupp I."/>
        </authorList>
    </citation>
    <scope>NUCLEOTIDE SEQUENCE [LARGE SCALE MRNA]</scope>
    <source>
        <tissue>Brain</tissue>
    </source>
</reference>
<reference key="2">
    <citation type="journal article" date="2000" name="Nature">
        <title>The DNA sequence of human chromosome 21.</title>
        <authorList>
            <person name="Hattori M."/>
            <person name="Fujiyama A."/>
            <person name="Taylor T.D."/>
            <person name="Watanabe H."/>
            <person name="Yada T."/>
            <person name="Park H.-S."/>
            <person name="Toyoda A."/>
            <person name="Ishii K."/>
            <person name="Totoki Y."/>
            <person name="Choi D.-K."/>
            <person name="Groner Y."/>
            <person name="Soeda E."/>
            <person name="Ohki M."/>
            <person name="Takagi T."/>
            <person name="Sakaki Y."/>
            <person name="Taudien S."/>
            <person name="Blechschmidt K."/>
            <person name="Polley A."/>
            <person name="Menzel U."/>
            <person name="Delabar J."/>
            <person name="Kumpf K."/>
            <person name="Lehmann R."/>
            <person name="Patterson D."/>
            <person name="Reichwald K."/>
            <person name="Rump A."/>
            <person name="Schillhabel M."/>
            <person name="Schudy A."/>
            <person name="Zimmermann W."/>
            <person name="Rosenthal A."/>
            <person name="Kudoh J."/>
            <person name="Shibuya K."/>
            <person name="Kawasaki K."/>
            <person name="Asakawa S."/>
            <person name="Shintani A."/>
            <person name="Sasaki T."/>
            <person name="Nagamine K."/>
            <person name="Mitsuyama S."/>
            <person name="Antonarakis S.E."/>
            <person name="Minoshima S."/>
            <person name="Shimizu N."/>
            <person name="Nordsiek G."/>
            <person name="Hornischer K."/>
            <person name="Brandt P."/>
            <person name="Scharfe M."/>
            <person name="Schoen O."/>
            <person name="Desario A."/>
            <person name="Reichelt J."/>
            <person name="Kauer G."/>
            <person name="Bloecker H."/>
            <person name="Ramser J."/>
            <person name="Beck A."/>
            <person name="Klages S."/>
            <person name="Hennig S."/>
            <person name="Riesselmann L."/>
            <person name="Dagand E."/>
            <person name="Wehrmeyer S."/>
            <person name="Borzym K."/>
            <person name="Gardiner K."/>
            <person name="Nizetic D."/>
            <person name="Francis F."/>
            <person name="Lehrach H."/>
            <person name="Reinhardt R."/>
            <person name="Yaspo M.-L."/>
        </authorList>
    </citation>
    <scope>NUCLEOTIDE SEQUENCE [LARGE SCALE GENOMIC DNA]</scope>
</reference>
<reference key="3">
    <citation type="journal article" date="2004" name="Genome Res.">
        <title>The status, quality, and expansion of the NIH full-length cDNA project: the Mammalian Gene Collection (MGC).</title>
        <authorList>
            <consortium name="The MGC Project Team"/>
        </authorList>
    </citation>
    <scope>NUCLEOTIDE SEQUENCE [LARGE SCALE MRNA]</scope>
    <source>
        <tissue>Brain</tissue>
    </source>
</reference>
<reference key="4">
    <citation type="journal article" date="2002" name="Mech. Dev.">
        <title>Exhaustive identification of human class II basic helix-loop-helix proteins by virtual library screening.</title>
        <authorList>
            <person name="McLellan A.S."/>
            <person name="Langlands K."/>
            <person name="Kealey T."/>
        </authorList>
    </citation>
    <scope>IDENTIFICATION</scope>
</reference>
<reference key="5">
    <citation type="journal article" date="2000" name="Neuron">
        <title>Identification of a novel family of oligodendrocyte lineage-specific basic helix-loop-helix transcription factors.</title>
        <authorList>
            <person name="Zhou Q."/>
            <person name="Wang S."/>
            <person name="Anderson D.J."/>
        </authorList>
    </citation>
    <scope>FUNCTION</scope>
</reference>
<reference key="6">
    <citation type="journal article" date="2001" name="Proc. Natl. Acad. Sci. U.S.A.">
        <title>Oligodendrocyte lineage genes (OLIG) as molecular markers for human glial brain tumors.</title>
        <authorList>
            <person name="Lu Q.R."/>
            <person name="Park J.K."/>
            <person name="Noll E."/>
            <person name="Chan J.A."/>
            <person name="Alberta J.A."/>
            <person name="Yuk D.-I."/>
            <person name="Alzamora M.G."/>
            <person name="Louis D.N."/>
            <person name="Stiles C.D."/>
            <person name="Rowitch D.H."/>
            <person name="Black P.M."/>
        </authorList>
    </citation>
    <scope>TISSUE SPECIFICITY</scope>
</reference>
<accession>Q8TAK6</accession>
<accession>Q7RTS0</accession>
<proteinExistence type="evidence at protein level"/>